<organism>
    <name type="scientific">Bacillus cereus (strain ATCC 14579 / DSM 31 / CCUG 7414 / JCM 2152 / NBRC 15305 / NCIMB 9373 / NCTC 2599 / NRRL B-3711)</name>
    <dbReference type="NCBI Taxonomy" id="226900"/>
    <lineage>
        <taxon>Bacteria</taxon>
        <taxon>Bacillati</taxon>
        <taxon>Bacillota</taxon>
        <taxon>Bacilli</taxon>
        <taxon>Bacillales</taxon>
        <taxon>Bacillaceae</taxon>
        <taxon>Bacillus</taxon>
        <taxon>Bacillus cereus group</taxon>
    </lineage>
</organism>
<keyword id="KW-1185">Reference proteome</keyword>
<keyword id="KW-0687">Ribonucleoprotein</keyword>
<keyword id="KW-0689">Ribosomal protein</keyword>
<proteinExistence type="inferred from homology"/>
<gene>
    <name evidence="1" type="primary">rpmG2</name>
    <name type="ordered locus">BC_4339</name>
</gene>
<name>RL332_BACCR</name>
<sequence>MRVNITLACTECGDRNYISKKNKRNNPERIELKKYCPRLKRVTLHRETK</sequence>
<accession>Q818C5</accession>
<reference key="1">
    <citation type="journal article" date="2003" name="Nature">
        <title>Genome sequence of Bacillus cereus and comparative analysis with Bacillus anthracis.</title>
        <authorList>
            <person name="Ivanova N."/>
            <person name="Sorokin A."/>
            <person name="Anderson I."/>
            <person name="Galleron N."/>
            <person name="Candelon B."/>
            <person name="Kapatral V."/>
            <person name="Bhattacharyya A."/>
            <person name="Reznik G."/>
            <person name="Mikhailova N."/>
            <person name="Lapidus A."/>
            <person name="Chu L."/>
            <person name="Mazur M."/>
            <person name="Goltsman E."/>
            <person name="Larsen N."/>
            <person name="D'Souza M."/>
            <person name="Walunas T."/>
            <person name="Grechkin Y."/>
            <person name="Pusch G."/>
            <person name="Haselkorn R."/>
            <person name="Fonstein M."/>
            <person name="Ehrlich S.D."/>
            <person name="Overbeek R."/>
            <person name="Kyrpides N.C."/>
        </authorList>
    </citation>
    <scope>NUCLEOTIDE SEQUENCE [LARGE SCALE GENOMIC DNA]</scope>
    <source>
        <strain>ATCC 14579 / DSM 31 / CCUG 7414 / JCM 2152 / NBRC 15305 / NCIMB 9373 / NCTC 2599 / NRRL B-3711</strain>
    </source>
</reference>
<dbReference type="EMBL" id="AE016877">
    <property type="protein sequence ID" value="AAP11252.1"/>
    <property type="molecule type" value="Genomic_DNA"/>
</dbReference>
<dbReference type="RefSeq" id="NP_834051.1">
    <property type="nucleotide sequence ID" value="NC_004722.1"/>
</dbReference>
<dbReference type="SMR" id="Q818C5"/>
<dbReference type="STRING" id="226900.BC_4339"/>
<dbReference type="KEGG" id="bce:BC4339"/>
<dbReference type="PATRIC" id="fig|226900.8.peg.4487"/>
<dbReference type="HOGENOM" id="CLU_190949_0_2_9"/>
<dbReference type="OrthoDB" id="197660at2"/>
<dbReference type="PRO" id="PR:Q818C5"/>
<dbReference type="Proteomes" id="UP000001417">
    <property type="component" value="Chromosome"/>
</dbReference>
<dbReference type="GO" id="GO:0005737">
    <property type="term" value="C:cytoplasm"/>
    <property type="evidence" value="ECO:0007669"/>
    <property type="project" value="UniProtKB-ARBA"/>
</dbReference>
<dbReference type="GO" id="GO:1990904">
    <property type="term" value="C:ribonucleoprotein complex"/>
    <property type="evidence" value="ECO:0007669"/>
    <property type="project" value="UniProtKB-KW"/>
</dbReference>
<dbReference type="GO" id="GO:0005840">
    <property type="term" value="C:ribosome"/>
    <property type="evidence" value="ECO:0007669"/>
    <property type="project" value="UniProtKB-KW"/>
</dbReference>
<dbReference type="GO" id="GO:0003735">
    <property type="term" value="F:structural constituent of ribosome"/>
    <property type="evidence" value="ECO:0007669"/>
    <property type="project" value="InterPro"/>
</dbReference>
<dbReference type="GO" id="GO:0006412">
    <property type="term" value="P:translation"/>
    <property type="evidence" value="ECO:0007669"/>
    <property type="project" value="UniProtKB-UniRule"/>
</dbReference>
<dbReference type="Gene3D" id="2.20.28.120">
    <property type="entry name" value="Ribosomal protein L33"/>
    <property type="match status" value="1"/>
</dbReference>
<dbReference type="HAMAP" id="MF_00294">
    <property type="entry name" value="Ribosomal_bL33"/>
    <property type="match status" value="1"/>
</dbReference>
<dbReference type="InterPro" id="IPR001705">
    <property type="entry name" value="Ribosomal_bL33"/>
</dbReference>
<dbReference type="InterPro" id="IPR018264">
    <property type="entry name" value="Ribosomal_bL33_CS"/>
</dbReference>
<dbReference type="InterPro" id="IPR038584">
    <property type="entry name" value="Ribosomal_bL33_sf"/>
</dbReference>
<dbReference type="InterPro" id="IPR011332">
    <property type="entry name" value="Ribosomal_zn-bd"/>
</dbReference>
<dbReference type="NCBIfam" id="NF001764">
    <property type="entry name" value="PRK00504.1"/>
    <property type="match status" value="1"/>
</dbReference>
<dbReference type="NCBIfam" id="NF001860">
    <property type="entry name" value="PRK00595.1"/>
    <property type="match status" value="1"/>
</dbReference>
<dbReference type="NCBIfam" id="TIGR01023">
    <property type="entry name" value="rpmG_bact"/>
    <property type="match status" value="1"/>
</dbReference>
<dbReference type="PANTHER" id="PTHR43168">
    <property type="entry name" value="50S RIBOSOMAL PROTEIN L33, CHLOROPLASTIC"/>
    <property type="match status" value="1"/>
</dbReference>
<dbReference type="PANTHER" id="PTHR43168:SF2">
    <property type="entry name" value="LARGE RIBOSOMAL SUBUNIT PROTEIN BL33C"/>
    <property type="match status" value="1"/>
</dbReference>
<dbReference type="Pfam" id="PF00471">
    <property type="entry name" value="Ribosomal_L33"/>
    <property type="match status" value="1"/>
</dbReference>
<dbReference type="SUPFAM" id="SSF57829">
    <property type="entry name" value="Zn-binding ribosomal proteins"/>
    <property type="match status" value="1"/>
</dbReference>
<dbReference type="PROSITE" id="PS00582">
    <property type="entry name" value="RIBOSOMAL_L33"/>
    <property type="match status" value="1"/>
</dbReference>
<comment type="similarity">
    <text evidence="1">Belongs to the bacterial ribosomal protein bL33 family.</text>
</comment>
<evidence type="ECO:0000255" key="1">
    <source>
        <dbReference type="HAMAP-Rule" id="MF_00294"/>
    </source>
</evidence>
<protein>
    <recommendedName>
        <fullName evidence="1">Large ribosomal subunit protein bL33B</fullName>
    </recommendedName>
    <alternativeName>
        <fullName evidence="1">50S ribosomal protein L33 2</fullName>
    </alternativeName>
</protein>
<feature type="chain" id="PRO_0000356386" description="Large ribosomal subunit protein bL33B">
    <location>
        <begin position="1"/>
        <end position="49"/>
    </location>
</feature>